<keyword id="KW-0963">Cytoplasm</keyword>
<keyword id="KW-0614">Plasmid</keyword>
<keyword id="KW-0653">Protein transport</keyword>
<keyword id="KW-0813">Transport</keyword>
<keyword id="KW-0843">Virulence</keyword>
<comment type="function">
    <text evidence="1">Component of the type III secretion system (T3SS), also called injectisome, which is used to inject bacterial effector proteins into eukaryotic host cells (By similarity). Acts as a regulator of the YscN/SctN ATPase activity (By similarity).</text>
</comment>
<comment type="subunit">
    <text evidence="1 2">The core secretion machinery of the T3SS is composed of approximately 20 different proteins, including cytoplasmic components, a base, an export apparatus and a needle (PubMed:30107569). This subunit is part of the cytosolic complex (By similarity). Interacts directly with YscN/SctN (T3SS ATPase) and YscQ/SctQ (the major sorting platform component) (By similarity).</text>
</comment>
<comment type="subcellular location">
    <subcellularLocation>
        <location evidence="1">Cytoplasm</location>
    </subcellularLocation>
</comment>
<comment type="induction">
    <text>At 37 degrees Celsius in the absence of calcium.</text>
</comment>
<comment type="similarity">
    <text evidence="4">Belongs to the SctL stator family.</text>
</comment>
<comment type="caution">
    <text evidence="4">It is uncertain whether Met-1 or Met-12 is the initiator.</text>
</comment>
<comment type="sequence caution" evidence="4">
    <conflict type="erroneous initiation">
        <sequence resource="EMBL-CDS" id="CAF25431"/>
    </conflict>
</comment>
<proteinExistence type="evidence at protein level"/>
<organism>
    <name type="scientific">Yersinia pseudotuberculosis serotype I (strain IP32953)</name>
    <dbReference type="NCBI Taxonomy" id="273123"/>
    <lineage>
        <taxon>Bacteria</taxon>
        <taxon>Pseudomonadati</taxon>
        <taxon>Pseudomonadota</taxon>
        <taxon>Gammaproteobacteria</taxon>
        <taxon>Enterobacterales</taxon>
        <taxon>Yersiniaceae</taxon>
        <taxon>Yersinia</taxon>
    </lineage>
</organism>
<reference key="1">
    <citation type="journal article" date="1992" name="J. Bacteriol.">
        <title>A novel protein, LcrQ, involved in the low-calcium response of Yersinia pseudotuberculosis shows extensive homology to YopH.</title>
        <authorList>
            <person name="Rimpilaeinen M."/>
            <person name="Forsberg A."/>
            <person name="Wolf-Watz H."/>
        </authorList>
    </citation>
    <scope>NUCLEOTIDE SEQUENCE [GENOMIC DNA]</scope>
    <source>
        <strain>YPIII / Serotype O:3</strain>
        <plasmid>pIB1</plasmid>
    </source>
</reference>
<reference key="2">
    <citation type="journal article" date="2004" name="Proc. Natl. Acad. Sci. U.S.A.">
        <title>Insights into the evolution of Yersinia pestis through whole-genome comparison with Yersinia pseudotuberculosis.</title>
        <authorList>
            <person name="Chain P.S.G."/>
            <person name="Carniel E."/>
            <person name="Larimer F.W."/>
            <person name="Lamerdin J."/>
            <person name="Stoutland P.O."/>
            <person name="Regala W.M."/>
            <person name="Georgescu A.M."/>
            <person name="Vergez L.M."/>
            <person name="Land M.L."/>
            <person name="Motin V.L."/>
            <person name="Brubaker R.R."/>
            <person name="Fowler J."/>
            <person name="Hinnebusch J."/>
            <person name="Marceau M."/>
            <person name="Medigue C."/>
            <person name="Simonet M."/>
            <person name="Chenal-Francisque V."/>
            <person name="Souza B."/>
            <person name="Dacheux D."/>
            <person name="Elliott J.M."/>
            <person name="Derbise A."/>
            <person name="Hauser L.J."/>
            <person name="Garcia E."/>
        </authorList>
    </citation>
    <scope>NUCLEOTIDE SEQUENCE [LARGE SCALE GENOMIC DNA]</scope>
    <source>
        <strain>IP32953</strain>
        <plasmid>pYV</plasmid>
    </source>
</reference>
<reference key="3">
    <citation type="journal article" date="1998" name="Microbiol. Mol. Biol. Rev.">
        <title>Type III protein secretion systems in bacterial pathogens of animals and plants.</title>
        <authorList>
            <person name="Hueck C.J."/>
        </authorList>
    </citation>
    <scope>REVIEW</scope>
    <scope>NOMENCLATURE</scope>
</reference>
<reference key="4">
    <citation type="journal article" date="2018" name="FEMS Microbiol. Lett.">
        <title>Bacterial type III secretion systems: a complex device for the delivery of bacterial effector proteins into eukaryotic host cells.</title>
        <authorList>
            <person name="Wagner S."/>
            <person name="Grin I."/>
            <person name="Malmsheimer S."/>
            <person name="Singh N."/>
            <person name="Torres-Vargas C.E."/>
            <person name="Westerhausen S."/>
        </authorList>
    </citation>
    <scope>REVIEW</scope>
    <scope>SUBUNIT</scope>
</reference>
<gene>
    <name evidence="3" type="primary">sctL</name>
    <name type="synonym">lcrKC</name>
    <name type="synonym">yscL</name>
    <name type="ordered locus">pYV0088</name>
</gene>
<evidence type="ECO:0000250" key="1">
    <source>
        <dbReference type="UniProtKB" id="Q01253"/>
    </source>
</evidence>
<evidence type="ECO:0000269" key="2">
    <source>
    </source>
</evidence>
<evidence type="ECO:0000303" key="3">
    <source>
    </source>
</evidence>
<evidence type="ECO:0000305" key="4"/>
<geneLocation type="plasmid">
    <name>pIB1</name>
</geneLocation>
<geneLocation type="plasmid">
    <name>pYV</name>
</geneLocation>
<name>SCTL_YERPS</name>
<sequence>MSQTCQTGYAYMQPFVQIIPSNLSLACGLRILRAEDYQSSLTTEELISAAKQDAEKILADAQEVYEQQKQLGWQAGMDEARTLQATLIHETQLQCQQFYRHVEQQMSEVVLLAVRKILNDYDQVAMTLQVVREALALVSNQKQVVVRVNPDQAGAIREQIAKVHKDFPEISYLEVTADARLDQGGCILETEVGIIDASIDGQIEALSRAISTTLGQMKVTE</sequence>
<feature type="chain" id="PRO_0000066494" description="Type 3 secretion system stator protein">
    <location>
        <begin position="1"/>
        <end position="221"/>
    </location>
</feature>
<protein>
    <recommendedName>
        <fullName evidence="4">Type 3 secretion system stator protein</fullName>
        <shortName evidence="4">T3SS stator protein</shortName>
    </recommendedName>
    <alternativeName>
        <fullName>Low calcium response locus protein KC</fullName>
    </alternativeName>
    <alternativeName>
        <fullName>Yop proteins translocation protein L</fullName>
    </alternativeName>
</protein>
<dbReference type="EMBL" id="M83986">
    <property type="protein sequence ID" value="AAA27653.1"/>
    <property type="molecule type" value="Genomic_DNA"/>
</dbReference>
<dbReference type="EMBL" id="BX936399">
    <property type="protein sequence ID" value="CAF25431.1"/>
    <property type="status" value="ALT_INIT"/>
    <property type="molecule type" value="Genomic_DNA"/>
</dbReference>
<dbReference type="PIR" id="A41877">
    <property type="entry name" value="A41877"/>
</dbReference>
<dbReference type="RefSeq" id="WP_010981371.1">
    <property type="nucleotide sequence ID" value="NZ_CP009711.1"/>
</dbReference>
<dbReference type="SMR" id="P69977"/>
<dbReference type="KEGG" id="yps:pYV0088"/>
<dbReference type="Proteomes" id="UP000001011">
    <property type="component" value="Plasmid pYV"/>
</dbReference>
<dbReference type="GO" id="GO:0005829">
    <property type="term" value="C:cytosol"/>
    <property type="evidence" value="ECO:0007669"/>
    <property type="project" value="TreeGrafter"/>
</dbReference>
<dbReference type="GO" id="GO:0030254">
    <property type="term" value="P:protein secretion by the type III secretion system"/>
    <property type="evidence" value="ECO:0007669"/>
    <property type="project" value="InterPro"/>
</dbReference>
<dbReference type="Gene3D" id="1.20.5.2950">
    <property type="match status" value="1"/>
</dbReference>
<dbReference type="InterPro" id="IPR018035">
    <property type="entry name" value="Flagellar_FliH/T3SS_HrpE"/>
</dbReference>
<dbReference type="InterPro" id="IPR012842">
    <property type="entry name" value="T3SS_SctL/SctL2"/>
</dbReference>
<dbReference type="InterPro" id="IPR051472">
    <property type="entry name" value="T3SS_Stator/FliH"/>
</dbReference>
<dbReference type="NCBIfam" id="TIGR02499">
    <property type="entry name" value="HrpE_YscL_not"/>
    <property type="match status" value="1"/>
</dbReference>
<dbReference type="NCBIfam" id="NF005392">
    <property type="entry name" value="PRK06937.1"/>
    <property type="match status" value="1"/>
</dbReference>
<dbReference type="PANTHER" id="PTHR34982:SF4">
    <property type="entry name" value="TYPE 3 SECRETION SYSTEM STATOR PROTEIN"/>
    <property type="match status" value="1"/>
</dbReference>
<dbReference type="PANTHER" id="PTHR34982">
    <property type="entry name" value="YOP PROTEINS TRANSLOCATION PROTEIN L"/>
    <property type="match status" value="1"/>
</dbReference>
<dbReference type="Pfam" id="PF02108">
    <property type="entry name" value="FliH"/>
    <property type="match status" value="1"/>
</dbReference>
<dbReference type="SUPFAM" id="SSF160527">
    <property type="entry name" value="V-type ATPase subunit E-like"/>
    <property type="match status" value="1"/>
</dbReference>
<accession>P69977</accession>
<accession>Q00928</accession>
<accession>Q663H8</accession>